<evidence type="ECO:0000250" key="1"/>
<evidence type="ECO:0000255" key="2"/>
<evidence type="ECO:0000269" key="3">
    <source>
    </source>
</evidence>
<evidence type="ECO:0000305" key="4"/>
<gene>
    <name type="primary">SCPL2</name>
    <name type="ordered locus">At1g73300</name>
    <name type="ORF">T18K17.3</name>
</gene>
<comment type="function">
    <text evidence="1">Probable carboxypeptidase.</text>
</comment>
<comment type="subcellular location">
    <subcellularLocation>
        <location evidence="4">Secreted</location>
    </subcellularLocation>
</comment>
<comment type="tissue specificity">
    <text evidence="3">Expressed in seedlings and roots.</text>
</comment>
<comment type="similarity">
    <text evidence="4">Belongs to the peptidase S10 family.</text>
</comment>
<accession>Q9CAU3</accession>
<keyword id="KW-0121">Carboxypeptidase</keyword>
<keyword id="KW-1015">Disulfide bond</keyword>
<keyword id="KW-0325">Glycoprotein</keyword>
<keyword id="KW-0378">Hydrolase</keyword>
<keyword id="KW-0645">Protease</keyword>
<keyword id="KW-1185">Reference proteome</keyword>
<keyword id="KW-0964">Secreted</keyword>
<keyword id="KW-0732">Signal</keyword>
<name>SCPL2_ARATH</name>
<protein>
    <recommendedName>
        <fullName>Serine carboxypeptidase-like 2</fullName>
        <ecNumber>3.4.16.-</ecNumber>
    </recommendedName>
</protein>
<sequence length="441" mass="50265">MANKYFSSVLKSLLLLLHLVFLSKQHVDSASIVKFLPGFEGPLPFELETGYIGIGEEEEVQLFYYFIKSERNPKEDPLILWLTGGPGCSSISGLLFENGPLTMKLDVYNGTLPSLVSTTYSWTKTSSMIFLDQPVGTGFSYSRTQQFNKPSDSGEAKRIHEFLQKWLGKHQEFSSNPFYVAGDSYSGLVVPATVQEISKGNYECCNPPINLQGYVLGNPLTDYAIDSNSRIPFAHGMALISDELYESLKKTCKGEYTNVHPRNTQCLKFIEEFNKCTNRILQQLILDPLCETETPDCYIYRYLLTTYWANDATVREALQINKESIGEWVRCYRTIPYDNDIKSSMPYHVNNSISGYRSLIYSGDHDLEVPYLGTQAWIRSLNYSIIDDWRPWMIKNQIAGYTRTYANKMTFATIKGGGHTIEFKPEEASIMFQRWINGQPL</sequence>
<feature type="signal peptide" evidence="2">
    <location>
        <begin position="1"/>
        <end position="29"/>
    </location>
</feature>
<feature type="chain" id="PRO_0000274616" description="Serine carboxypeptidase-like 2">
    <location>
        <begin position="30"/>
        <end position="441"/>
    </location>
</feature>
<feature type="active site" evidence="1">
    <location>
        <position position="184"/>
    </location>
</feature>
<feature type="active site" evidence="1">
    <location>
        <position position="366"/>
    </location>
</feature>
<feature type="active site" evidence="1">
    <location>
        <position position="419"/>
    </location>
</feature>
<feature type="glycosylation site" description="N-linked (GlcNAc...) asparagine" evidence="2">
    <location>
        <position position="109"/>
    </location>
</feature>
<feature type="glycosylation site" description="N-linked (GlcNAc...) asparagine" evidence="2">
    <location>
        <position position="350"/>
    </location>
</feature>
<feature type="glycosylation site" description="N-linked (GlcNAc...) asparagine" evidence="2">
    <location>
        <position position="382"/>
    </location>
</feature>
<feature type="disulfide bond" evidence="1">
    <location>
        <begin position="88"/>
        <end position="331"/>
    </location>
</feature>
<feature type="disulfide bond" evidence="1">
    <location>
        <begin position="252"/>
        <end position="266"/>
    </location>
</feature>
<feature type="disulfide bond" evidence="1">
    <location>
        <begin position="290"/>
        <end position="297"/>
    </location>
</feature>
<proteinExistence type="evidence at transcript level"/>
<dbReference type="EC" id="3.4.16.-"/>
<dbReference type="EMBL" id="AC010556">
    <property type="protein sequence ID" value="AAG52135.1"/>
    <property type="molecule type" value="Genomic_DNA"/>
</dbReference>
<dbReference type="EMBL" id="CP002684">
    <property type="protein sequence ID" value="AEE35439.1"/>
    <property type="molecule type" value="Genomic_DNA"/>
</dbReference>
<dbReference type="EMBL" id="CP002684">
    <property type="protein sequence ID" value="ANM60225.1"/>
    <property type="molecule type" value="Genomic_DNA"/>
</dbReference>
<dbReference type="PIR" id="C96759">
    <property type="entry name" value="C96759"/>
</dbReference>
<dbReference type="RefSeq" id="NP_001322525.1">
    <property type="nucleotide sequence ID" value="NM_001334583.1"/>
</dbReference>
<dbReference type="RefSeq" id="NP_177473.1">
    <property type="nucleotide sequence ID" value="NM_105989.2"/>
</dbReference>
<dbReference type="SMR" id="Q9CAU3"/>
<dbReference type="FunCoup" id="Q9CAU3">
    <property type="interactions" value="808"/>
</dbReference>
<dbReference type="STRING" id="3702.Q9CAU3"/>
<dbReference type="ESTHER" id="arath-SCP2">
    <property type="family name" value="Carboxypeptidase_S10"/>
</dbReference>
<dbReference type="MEROPS" id="S10.A07"/>
<dbReference type="MEROPS" id="S10.A16"/>
<dbReference type="GlyCosmos" id="Q9CAU3">
    <property type="glycosylation" value="3 sites, No reported glycans"/>
</dbReference>
<dbReference type="GlyGen" id="Q9CAU3">
    <property type="glycosylation" value="3 sites"/>
</dbReference>
<dbReference type="PaxDb" id="3702-AT1G73300.1"/>
<dbReference type="EnsemblPlants" id="AT1G73300.1">
    <property type="protein sequence ID" value="AT1G73300.1"/>
    <property type="gene ID" value="AT1G73300"/>
</dbReference>
<dbReference type="EnsemblPlants" id="AT1G73300.2">
    <property type="protein sequence ID" value="AT1G73300.2"/>
    <property type="gene ID" value="AT1G73300"/>
</dbReference>
<dbReference type="GeneID" id="843664"/>
<dbReference type="Gramene" id="AT1G73300.1">
    <property type="protein sequence ID" value="AT1G73300.1"/>
    <property type="gene ID" value="AT1G73300"/>
</dbReference>
<dbReference type="Gramene" id="AT1G73300.2">
    <property type="protein sequence ID" value="AT1G73300.2"/>
    <property type="gene ID" value="AT1G73300"/>
</dbReference>
<dbReference type="KEGG" id="ath:AT1G73300"/>
<dbReference type="Araport" id="AT1G73300"/>
<dbReference type="TAIR" id="AT1G73300">
    <property type="gene designation" value="SCPL2"/>
</dbReference>
<dbReference type="eggNOG" id="KOG1282">
    <property type="taxonomic scope" value="Eukaryota"/>
</dbReference>
<dbReference type="HOGENOM" id="CLU_008523_0_1_1"/>
<dbReference type="InParanoid" id="Q9CAU3"/>
<dbReference type="OMA" id="ERWISHE"/>
<dbReference type="PhylomeDB" id="Q9CAU3"/>
<dbReference type="BioCyc" id="ARA:AT1G73300-MONOMER"/>
<dbReference type="PRO" id="PR:Q9CAU3"/>
<dbReference type="Proteomes" id="UP000006548">
    <property type="component" value="Chromosome 1"/>
</dbReference>
<dbReference type="GO" id="GO:0005576">
    <property type="term" value="C:extracellular region"/>
    <property type="evidence" value="ECO:0007669"/>
    <property type="project" value="UniProtKB-SubCell"/>
</dbReference>
<dbReference type="GO" id="GO:0004185">
    <property type="term" value="F:serine-type carboxypeptidase activity"/>
    <property type="evidence" value="ECO:0007669"/>
    <property type="project" value="InterPro"/>
</dbReference>
<dbReference type="GO" id="GO:0006508">
    <property type="term" value="P:proteolysis"/>
    <property type="evidence" value="ECO:0007669"/>
    <property type="project" value="UniProtKB-KW"/>
</dbReference>
<dbReference type="FunFam" id="3.40.50.12670:FF:000001">
    <property type="entry name" value="Carboxypeptidase"/>
    <property type="match status" value="1"/>
</dbReference>
<dbReference type="FunFam" id="3.40.50.1820:FF:000148">
    <property type="entry name" value="Serine carboxypeptidase-like 11"/>
    <property type="match status" value="1"/>
</dbReference>
<dbReference type="Gene3D" id="3.40.50.1820">
    <property type="entry name" value="alpha/beta hydrolase"/>
    <property type="match status" value="1"/>
</dbReference>
<dbReference type="InterPro" id="IPR029058">
    <property type="entry name" value="AB_hydrolase_fold"/>
</dbReference>
<dbReference type="InterPro" id="IPR001563">
    <property type="entry name" value="Peptidase_S10"/>
</dbReference>
<dbReference type="PANTHER" id="PTHR11802:SF457">
    <property type="entry name" value="SERINE CARBOXYPEPTIDASE-LIKE 1-RELATED"/>
    <property type="match status" value="1"/>
</dbReference>
<dbReference type="PANTHER" id="PTHR11802">
    <property type="entry name" value="SERINE PROTEASE FAMILY S10 SERINE CARBOXYPEPTIDASE"/>
    <property type="match status" value="1"/>
</dbReference>
<dbReference type="Pfam" id="PF00450">
    <property type="entry name" value="Peptidase_S10"/>
    <property type="match status" value="1"/>
</dbReference>
<dbReference type="PRINTS" id="PR00724">
    <property type="entry name" value="CRBOXYPTASEC"/>
</dbReference>
<dbReference type="SUPFAM" id="SSF53474">
    <property type="entry name" value="alpha/beta-Hydrolases"/>
    <property type="match status" value="1"/>
</dbReference>
<organism>
    <name type="scientific">Arabidopsis thaliana</name>
    <name type="common">Mouse-ear cress</name>
    <dbReference type="NCBI Taxonomy" id="3702"/>
    <lineage>
        <taxon>Eukaryota</taxon>
        <taxon>Viridiplantae</taxon>
        <taxon>Streptophyta</taxon>
        <taxon>Embryophyta</taxon>
        <taxon>Tracheophyta</taxon>
        <taxon>Spermatophyta</taxon>
        <taxon>Magnoliopsida</taxon>
        <taxon>eudicotyledons</taxon>
        <taxon>Gunneridae</taxon>
        <taxon>Pentapetalae</taxon>
        <taxon>rosids</taxon>
        <taxon>malvids</taxon>
        <taxon>Brassicales</taxon>
        <taxon>Brassicaceae</taxon>
        <taxon>Camelineae</taxon>
        <taxon>Arabidopsis</taxon>
    </lineage>
</organism>
<reference key="1">
    <citation type="journal article" date="2000" name="Nature">
        <title>Sequence and analysis of chromosome 1 of the plant Arabidopsis thaliana.</title>
        <authorList>
            <person name="Theologis A."/>
            <person name="Ecker J.R."/>
            <person name="Palm C.J."/>
            <person name="Federspiel N.A."/>
            <person name="Kaul S."/>
            <person name="White O."/>
            <person name="Alonso J."/>
            <person name="Altafi H."/>
            <person name="Araujo R."/>
            <person name="Bowman C.L."/>
            <person name="Brooks S.Y."/>
            <person name="Buehler E."/>
            <person name="Chan A."/>
            <person name="Chao Q."/>
            <person name="Chen H."/>
            <person name="Cheuk R.F."/>
            <person name="Chin C.W."/>
            <person name="Chung M.K."/>
            <person name="Conn L."/>
            <person name="Conway A.B."/>
            <person name="Conway A.R."/>
            <person name="Creasy T.H."/>
            <person name="Dewar K."/>
            <person name="Dunn P."/>
            <person name="Etgu P."/>
            <person name="Feldblyum T.V."/>
            <person name="Feng J.-D."/>
            <person name="Fong B."/>
            <person name="Fujii C.Y."/>
            <person name="Gill J.E."/>
            <person name="Goldsmith A.D."/>
            <person name="Haas B."/>
            <person name="Hansen N.F."/>
            <person name="Hughes B."/>
            <person name="Huizar L."/>
            <person name="Hunter J.L."/>
            <person name="Jenkins J."/>
            <person name="Johnson-Hopson C."/>
            <person name="Khan S."/>
            <person name="Khaykin E."/>
            <person name="Kim C.J."/>
            <person name="Koo H.L."/>
            <person name="Kremenetskaia I."/>
            <person name="Kurtz D.B."/>
            <person name="Kwan A."/>
            <person name="Lam B."/>
            <person name="Langin-Hooper S."/>
            <person name="Lee A."/>
            <person name="Lee J.M."/>
            <person name="Lenz C.A."/>
            <person name="Li J.H."/>
            <person name="Li Y.-P."/>
            <person name="Lin X."/>
            <person name="Liu S.X."/>
            <person name="Liu Z.A."/>
            <person name="Luros J.S."/>
            <person name="Maiti R."/>
            <person name="Marziali A."/>
            <person name="Militscher J."/>
            <person name="Miranda M."/>
            <person name="Nguyen M."/>
            <person name="Nierman W.C."/>
            <person name="Osborne B.I."/>
            <person name="Pai G."/>
            <person name="Peterson J."/>
            <person name="Pham P.K."/>
            <person name="Rizzo M."/>
            <person name="Rooney T."/>
            <person name="Rowley D."/>
            <person name="Sakano H."/>
            <person name="Salzberg S.L."/>
            <person name="Schwartz J.R."/>
            <person name="Shinn P."/>
            <person name="Southwick A.M."/>
            <person name="Sun H."/>
            <person name="Tallon L.J."/>
            <person name="Tambunga G."/>
            <person name="Toriumi M.J."/>
            <person name="Town C.D."/>
            <person name="Utterback T."/>
            <person name="Van Aken S."/>
            <person name="Vaysberg M."/>
            <person name="Vysotskaia V.S."/>
            <person name="Walker M."/>
            <person name="Wu D."/>
            <person name="Yu G."/>
            <person name="Fraser C.M."/>
            <person name="Venter J.C."/>
            <person name="Davis R.W."/>
        </authorList>
    </citation>
    <scope>NUCLEOTIDE SEQUENCE [LARGE SCALE GENOMIC DNA]</scope>
    <source>
        <strain>cv. Columbia</strain>
    </source>
</reference>
<reference key="2">
    <citation type="journal article" date="2017" name="Plant J.">
        <title>Araport11: a complete reannotation of the Arabidopsis thaliana reference genome.</title>
        <authorList>
            <person name="Cheng C.Y."/>
            <person name="Krishnakumar V."/>
            <person name="Chan A.P."/>
            <person name="Thibaud-Nissen F."/>
            <person name="Schobel S."/>
            <person name="Town C.D."/>
        </authorList>
    </citation>
    <scope>GENOME REANNOTATION</scope>
    <source>
        <strain>cv. Columbia</strain>
    </source>
</reference>
<reference key="3">
    <citation type="journal article" date="2005" name="Plant Physiol.">
        <title>An expression and bioinformatics analysis of the Arabidopsis serine carboxypeptidase-like gene family.</title>
        <authorList>
            <person name="Fraser C.M."/>
            <person name="Rider L.W."/>
            <person name="Chapple C."/>
        </authorList>
    </citation>
    <scope>GENE FAMILY</scope>
    <scope>TISSUE SPECIFICITY</scope>
    <scope>NOMENCLATURE</scope>
</reference>